<protein>
    <recommendedName>
        <fullName evidence="1">Ribosomal RNA small subunit methyltransferase NEP1</fullName>
        <ecNumber evidence="1">2.1.1.-</ecNumber>
    </recommendedName>
    <alternativeName>
        <fullName evidence="1">18S rRNA (pseudouridine-N1)-methyltransferase</fullName>
    </alternativeName>
</protein>
<gene>
    <name evidence="1" type="primary">NEP1</name>
</gene>
<reference key="1">
    <citation type="journal article" date="2002" name="Curr. Genet.">
        <title>Nep1p (Emg1p), a novel protein conserved in eukaryotes and archaea, is involved in ribosome biogenesis.</title>
        <authorList>
            <person name="Eschrich D."/>
            <person name="Buchhaupt M."/>
            <person name="Koetter P."/>
            <person name="Entian K.-D."/>
        </authorList>
    </citation>
    <scope>NUCLEOTIDE SEQUENCE [GENOMIC DNA]</scope>
    <scope>SUBCELLULAR LOCATION</scope>
</reference>
<organism>
    <name type="scientific">Candida albicans</name>
    <name type="common">Yeast</name>
    <dbReference type="NCBI Taxonomy" id="5476"/>
    <lineage>
        <taxon>Eukaryota</taxon>
        <taxon>Fungi</taxon>
        <taxon>Dikarya</taxon>
        <taxon>Ascomycota</taxon>
        <taxon>Saccharomycotina</taxon>
        <taxon>Pichiomycetes</taxon>
        <taxon>Debaryomycetaceae</taxon>
        <taxon>Candida/Lodderomyces clade</taxon>
        <taxon>Candida</taxon>
    </lineage>
</organism>
<keyword id="KW-0489">Methyltransferase</keyword>
<keyword id="KW-0539">Nucleus</keyword>
<keyword id="KW-0690">Ribosome biogenesis</keyword>
<keyword id="KW-0694">RNA-binding</keyword>
<keyword id="KW-0698">rRNA processing</keyword>
<keyword id="KW-0699">rRNA-binding</keyword>
<keyword id="KW-0949">S-adenosyl-L-methionine</keyword>
<keyword id="KW-0808">Transferase</keyword>
<feature type="chain" id="PRO_0000158610" description="Ribosomal RNA small subunit methyltransferase NEP1">
    <location>
        <begin position="1"/>
        <end position="267"/>
    </location>
</feature>
<feature type="region of interest" description="Disordered" evidence="2">
    <location>
        <begin position="1"/>
        <end position="46"/>
    </location>
</feature>
<feature type="compositionally biased region" description="Low complexity" evidence="2">
    <location>
        <begin position="16"/>
        <end position="32"/>
    </location>
</feature>
<feature type="binding site" evidence="1">
    <location>
        <position position="195"/>
    </location>
    <ligand>
        <name>S-adenosyl-L-methionine</name>
        <dbReference type="ChEBI" id="CHEBI:59789"/>
    </ligand>
</feature>
<feature type="binding site" evidence="1">
    <location>
        <position position="222"/>
    </location>
    <ligand>
        <name>S-adenosyl-L-methionine</name>
        <dbReference type="ChEBI" id="CHEBI:59789"/>
    </ligand>
</feature>
<feature type="binding site" evidence="1">
    <location>
        <begin position="227"/>
        <end position="229"/>
    </location>
    <ligand>
        <name>S-adenosyl-L-methionine</name>
        <dbReference type="ChEBI" id="CHEBI:59789"/>
    </ligand>
</feature>
<feature type="binding site" evidence="1">
    <location>
        <begin position="242"/>
        <end position="247"/>
    </location>
    <ligand>
        <name>S-adenosyl-L-methionine</name>
        <dbReference type="ChEBI" id="CHEBI:59789"/>
    </ligand>
</feature>
<feature type="site" description="Interaction with substrate rRNA" evidence="1">
    <location>
        <position position="103"/>
    </location>
</feature>
<feature type="site" description="Stabilizes Arg-103" evidence="1">
    <location>
        <position position="105"/>
    </location>
</feature>
<feature type="site" description="Interaction with substrate rRNA" evidence="1">
    <location>
        <position position="144"/>
    </location>
</feature>
<feature type="site" description="Interaction with substrate rRNA" evidence="1">
    <location>
        <position position="147"/>
    </location>
</feature>
<feature type="site" description="Interaction with substrate rRNA" evidence="1">
    <location>
        <position position="151"/>
    </location>
</feature>
<sequence length="267" mass="29547">MSELKNGTTEPKKNETTQSDSKSKSTSTNKSSVPPASLVPVQPTALTSRDKTTQRLIVVLSQACLETYKMNSGGPGGDRFALLNCDDHQGLLRKMGRDIAEARPDITHQCLLTLLDSPINKAGRLQVYIQTARGVLIEVNPSVRIPRTFKRFSGLMVQLLHKLSIRSENSKEVLLKVIKNPITDHLPTKCRKVTLSFDAELKRVQDYVTTLDENESICVFVGAMARGKDNFADEFVDEKIGLSDYPLSASVACSKFCHGCEDVWGIY</sequence>
<comment type="function">
    <text evidence="1">S-adenosyl-L-methionine-dependent pseudouridine N(1)-methyltransferase that methylates the pseudouridine corresponding to position 1189 (Psi1189) in S.cerevisiae 18S rRNA. Involved the biosynthesis of the hypermodified N1-methyl-N3-(3-amino-3-carboxypropyl) pseudouridine (m1acp3-Psi) conserved in eukaryotic 18S rRNA. Also has an essential role in 40S ribosomal subunit biogenesis independent on its methyltransferase activity, facilitating the incorporation of ribosomal protein S19 during the formation of pre-ribosomes.</text>
</comment>
<comment type="catalytic activity">
    <reaction evidence="1">
        <text>a pseudouridine in rRNA + S-adenosyl-L-methionine = an N(1)-methylpseudouridine in rRNA + S-adenosyl-L-homocysteine + H(+)</text>
        <dbReference type="Rhea" id="RHEA:46696"/>
        <dbReference type="Rhea" id="RHEA-COMP:11634"/>
        <dbReference type="Rhea" id="RHEA-COMP:13933"/>
        <dbReference type="ChEBI" id="CHEBI:15378"/>
        <dbReference type="ChEBI" id="CHEBI:57856"/>
        <dbReference type="ChEBI" id="CHEBI:59789"/>
        <dbReference type="ChEBI" id="CHEBI:65314"/>
        <dbReference type="ChEBI" id="CHEBI:74890"/>
    </reaction>
</comment>
<comment type="subunit">
    <text evidence="1">Homodimer.</text>
</comment>
<comment type="subcellular location">
    <subcellularLocation>
        <location evidence="3">Nucleus</location>
        <location evidence="3">Nucleolus</location>
    </subcellularLocation>
</comment>
<comment type="similarity">
    <text evidence="4">Belongs to the class IV-like SAM-binding methyltransferase superfamily. RNA methyltransferase NEP1 family.</text>
</comment>
<proteinExistence type="inferred from homology"/>
<accession>Q9P8P7</accession>
<dbReference type="EC" id="2.1.1.-" evidence="1"/>
<dbReference type="EMBL" id="AF222909">
    <property type="protein sequence ID" value="AAF35325.1"/>
    <property type="molecule type" value="Genomic_DNA"/>
</dbReference>
<dbReference type="SMR" id="Q9P8P7"/>
<dbReference type="CGD" id="CAL0000197320">
    <property type="gene designation" value="NEP1"/>
</dbReference>
<dbReference type="VEuPathDB" id="FungiDB:C1_11380W_A"/>
<dbReference type="VEuPathDB" id="FungiDB:CAWG_00298"/>
<dbReference type="BRENDA" id="2.1.1.260">
    <property type="organism ID" value="1096"/>
</dbReference>
<dbReference type="GO" id="GO:0005730">
    <property type="term" value="C:nucleolus"/>
    <property type="evidence" value="ECO:0000314"/>
    <property type="project" value="CGD"/>
</dbReference>
<dbReference type="GO" id="GO:0032040">
    <property type="term" value="C:small-subunit processome"/>
    <property type="evidence" value="ECO:0007669"/>
    <property type="project" value="TreeGrafter"/>
</dbReference>
<dbReference type="GO" id="GO:0070037">
    <property type="term" value="F:rRNA (pseudouridine) methyltransferase activity"/>
    <property type="evidence" value="ECO:0000250"/>
    <property type="project" value="UniProtKB"/>
</dbReference>
<dbReference type="GO" id="GO:0019843">
    <property type="term" value="F:rRNA binding"/>
    <property type="evidence" value="ECO:0007669"/>
    <property type="project" value="UniProtKB-KW"/>
</dbReference>
<dbReference type="GO" id="GO:0042254">
    <property type="term" value="P:ribosome biogenesis"/>
    <property type="evidence" value="ECO:0000316"/>
    <property type="project" value="CGD"/>
</dbReference>
<dbReference type="GO" id="GO:0070475">
    <property type="term" value="P:rRNA base methylation"/>
    <property type="evidence" value="ECO:0007669"/>
    <property type="project" value="InterPro"/>
</dbReference>
<dbReference type="CDD" id="cd18088">
    <property type="entry name" value="Nep1-like"/>
    <property type="match status" value="1"/>
</dbReference>
<dbReference type="FunFam" id="3.40.1280.10:FF:000003">
    <property type="entry name" value="Ribosomal RNA small subunit methyltransferase"/>
    <property type="match status" value="1"/>
</dbReference>
<dbReference type="Gene3D" id="3.40.1280.10">
    <property type="match status" value="1"/>
</dbReference>
<dbReference type="InterPro" id="IPR029028">
    <property type="entry name" value="Alpha/beta_knot_MTases"/>
</dbReference>
<dbReference type="InterPro" id="IPR005304">
    <property type="entry name" value="Rbsml_bgen_MeTrfase_EMG1/NEP1"/>
</dbReference>
<dbReference type="InterPro" id="IPR029026">
    <property type="entry name" value="tRNA_m1G_MTases_N"/>
</dbReference>
<dbReference type="PANTHER" id="PTHR12636">
    <property type="entry name" value="NEP1/MRA1"/>
    <property type="match status" value="1"/>
</dbReference>
<dbReference type="PANTHER" id="PTHR12636:SF5">
    <property type="entry name" value="RIBOSOMAL RNA SMALL SUBUNIT METHYLTRANSFERASE NEP1"/>
    <property type="match status" value="1"/>
</dbReference>
<dbReference type="Pfam" id="PF03587">
    <property type="entry name" value="EMG1"/>
    <property type="match status" value="1"/>
</dbReference>
<dbReference type="SUPFAM" id="SSF75217">
    <property type="entry name" value="alpha/beta knot"/>
    <property type="match status" value="1"/>
</dbReference>
<evidence type="ECO:0000250" key="1">
    <source>
        <dbReference type="UniProtKB" id="Q06287"/>
    </source>
</evidence>
<evidence type="ECO:0000256" key="2">
    <source>
        <dbReference type="SAM" id="MobiDB-lite"/>
    </source>
</evidence>
<evidence type="ECO:0000269" key="3">
    <source>
    </source>
</evidence>
<evidence type="ECO:0000305" key="4"/>
<name>NEP1_CANAX</name>